<reference key="1">
    <citation type="journal article" date="2004" name="Plant Cell">
        <title>The SENSITIVE TO FREEZING2 gene, required for freezing tolerance in Arabidopsis thaliana, encodes a beta-glucosidase.</title>
        <authorList>
            <person name="Thorlby G."/>
            <person name="Fourrier N."/>
            <person name="Warren G."/>
        </authorList>
    </citation>
    <scope>NUCLEOTIDE SEQUENCE [MRNA]</scope>
</reference>
<reference key="2">
    <citation type="journal article" date="2005" name="BMC Biol.">
        <title>The sequence of rice chromosomes 11 and 12, rich in disease resistance genes and recent gene duplications.</title>
        <authorList>
            <consortium name="The rice chromosomes 11 and 12 sequencing consortia"/>
        </authorList>
    </citation>
    <scope>NUCLEOTIDE SEQUENCE [LARGE SCALE GENOMIC DNA]</scope>
    <source>
        <strain>cv. Nipponbare</strain>
    </source>
</reference>
<reference key="3">
    <citation type="journal article" date="2005" name="Nature">
        <title>The map-based sequence of the rice genome.</title>
        <authorList>
            <consortium name="International rice genome sequencing project (IRGSP)"/>
        </authorList>
    </citation>
    <scope>NUCLEOTIDE SEQUENCE [LARGE SCALE GENOMIC DNA]</scope>
    <source>
        <strain>cv. Nipponbare</strain>
    </source>
</reference>
<reference key="4">
    <citation type="journal article" date="2008" name="Nucleic Acids Res.">
        <title>The rice annotation project database (RAP-DB): 2008 update.</title>
        <authorList>
            <consortium name="The rice annotation project (RAP)"/>
        </authorList>
    </citation>
    <scope>GENOME REANNOTATION</scope>
    <source>
        <strain>cv. Nipponbare</strain>
    </source>
</reference>
<reference key="5">
    <citation type="journal article" date="2013" name="Rice">
        <title>Improvement of the Oryza sativa Nipponbare reference genome using next generation sequence and optical map data.</title>
        <authorList>
            <person name="Kawahara Y."/>
            <person name="de la Bastide M."/>
            <person name="Hamilton J.P."/>
            <person name="Kanamori H."/>
            <person name="McCombie W.R."/>
            <person name="Ouyang S."/>
            <person name="Schwartz D.C."/>
            <person name="Tanaka T."/>
            <person name="Wu J."/>
            <person name="Zhou S."/>
            <person name="Childs K.L."/>
            <person name="Davidson R.M."/>
            <person name="Lin H."/>
            <person name="Quesada-Ocampo L."/>
            <person name="Vaillancourt B."/>
            <person name="Sakai H."/>
            <person name="Lee S.S."/>
            <person name="Kim J."/>
            <person name="Numa H."/>
            <person name="Itoh T."/>
            <person name="Buell C.R."/>
            <person name="Matsumoto T."/>
        </authorList>
    </citation>
    <scope>GENOME REANNOTATION</scope>
    <source>
        <strain>cv. Nipponbare</strain>
    </source>
</reference>
<reference key="6">
    <citation type="journal article" date="2005" name="PLoS Biol.">
        <title>The genomes of Oryza sativa: a history of duplications.</title>
        <authorList>
            <person name="Yu J."/>
            <person name="Wang J."/>
            <person name="Lin W."/>
            <person name="Li S."/>
            <person name="Li H."/>
            <person name="Zhou J."/>
            <person name="Ni P."/>
            <person name="Dong W."/>
            <person name="Hu S."/>
            <person name="Zeng C."/>
            <person name="Zhang J."/>
            <person name="Zhang Y."/>
            <person name="Li R."/>
            <person name="Xu Z."/>
            <person name="Li S."/>
            <person name="Li X."/>
            <person name="Zheng H."/>
            <person name="Cong L."/>
            <person name="Lin L."/>
            <person name="Yin J."/>
            <person name="Geng J."/>
            <person name="Li G."/>
            <person name="Shi J."/>
            <person name="Liu J."/>
            <person name="Lv H."/>
            <person name="Li J."/>
            <person name="Wang J."/>
            <person name="Deng Y."/>
            <person name="Ran L."/>
            <person name="Shi X."/>
            <person name="Wang X."/>
            <person name="Wu Q."/>
            <person name="Li C."/>
            <person name="Ren X."/>
            <person name="Wang J."/>
            <person name="Wang X."/>
            <person name="Li D."/>
            <person name="Liu D."/>
            <person name="Zhang X."/>
            <person name="Ji Z."/>
            <person name="Zhao W."/>
            <person name="Sun Y."/>
            <person name="Zhang Z."/>
            <person name="Bao J."/>
            <person name="Han Y."/>
            <person name="Dong L."/>
            <person name="Ji J."/>
            <person name="Chen P."/>
            <person name="Wu S."/>
            <person name="Liu J."/>
            <person name="Xiao Y."/>
            <person name="Bu D."/>
            <person name="Tan J."/>
            <person name="Yang L."/>
            <person name="Ye C."/>
            <person name="Zhang J."/>
            <person name="Xu J."/>
            <person name="Zhou Y."/>
            <person name="Yu Y."/>
            <person name="Zhang B."/>
            <person name="Zhuang S."/>
            <person name="Wei H."/>
            <person name="Liu B."/>
            <person name="Lei M."/>
            <person name="Yu H."/>
            <person name="Li Y."/>
            <person name="Xu H."/>
            <person name="Wei S."/>
            <person name="He X."/>
            <person name="Fang L."/>
            <person name="Zhang Z."/>
            <person name="Zhang Y."/>
            <person name="Huang X."/>
            <person name="Su Z."/>
            <person name="Tong W."/>
            <person name="Li J."/>
            <person name="Tong Z."/>
            <person name="Li S."/>
            <person name="Ye J."/>
            <person name="Wang L."/>
            <person name="Fang L."/>
            <person name="Lei T."/>
            <person name="Chen C.-S."/>
            <person name="Chen H.-C."/>
            <person name="Xu Z."/>
            <person name="Li H."/>
            <person name="Huang H."/>
            <person name="Zhang F."/>
            <person name="Xu H."/>
            <person name="Li N."/>
            <person name="Zhao C."/>
            <person name="Li S."/>
            <person name="Dong L."/>
            <person name="Huang Y."/>
            <person name="Li L."/>
            <person name="Xi Y."/>
            <person name="Qi Q."/>
            <person name="Li W."/>
            <person name="Zhang B."/>
            <person name="Hu W."/>
            <person name="Zhang Y."/>
            <person name="Tian X."/>
            <person name="Jiao Y."/>
            <person name="Liang X."/>
            <person name="Jin J."/>
            <person name="Gao L."/>
            <person name="Zheng W."/>
            <person name="Hao B."/>
            <person name="Liu S.-M."/>
            <person name="Wang W."/>
            <person name="Yuan L."/>
            <person name="Cao M."/>
            <person name="McDermott J."/>
            <person name="Samudrala R."/>
            <person name="Wang J."/>
            <person name="Wong G.K.-S."/>
            <person name="Yang H."/>
        </authorList>
    </citation>
    <scope>NUCLEOTIDE SEQUENCE [LARGE SCALE GENOMIC DNA]</scope>
    <source>
        <strain>cv. Nipponbare</strain>
    </source>
</reference>
<reference key="7">
    <citation type="journal article" date="2006" name="BMC Plant Biol.">
        <title>Analysis of rice glycosyl hydrolase family 1 and expression of Os4bglu12 beta-glucosidase.</title>
        <authorList>
            <person name="Opassiri R."/>
            <person name="Pomthong B."/>
            <person name="Onkoksoong T."/>
            <person name="Akiyama T."/>
            <person name="Esen A."/>
            <person name="Ketudat Cairns J.R."/>
        </authorList>
    </citation>
    <scope>GENE FAMILY</scope>
    <scope>NOMENCLATURE</scope>
</reference>
<reference key="8">
    <citation type="journal article" date="2008" name="Plant J.">
        <title>A role for SENSITIVE TO FREEZING2 in protecting chloroplasts against freeze-induced damage in Arabidopsis.</title>
        <authorList>
            <person name="Fourrier N."/>
            <person name="Bedard J."/>
            <person name="Lopez-Juez E."/>
            <person name="Barbrook A."/>
            <person name="Bowyer J."/>
            <person name="Jarvis P."/>
            <person name="Warren G."/>
            <person name="Thorlby G."/>
        </authorList>
    </citation>
    <scope>FUNCTION</scope>
</reference>
<feature type="chain" id="PRO_0000390355" description="Beta-glucosidase-like SFR2, chloroplastic">
    <location>
        <begin position="1"/>
        <end position="647"/>
    </location>
</feature>
<feature type="region of interest" description="Disordered" evidence="7">
    <location>
        <begin position="116"/>
        <end position="140"/>
    </location>
</feature>
<feature type="compositionally biased region" description="Polar residues" evidence="7">
    <location>
        <begin position="123"/>
        <end position="132"/>
    </location>
</feature>
<feature type="active site" description="Proton donor" evidence="2">
    <location>
        <position position="303"/>
    </location>
</feature>
<feature type="active site" description="Nucleophile" evidence="6">
    <location>
        <position position="466"/>
    </location>
</feature>
<feature type="binding site" evidence="2">
    <location>
        <position position="258"/>
    </location>
    <ligand>
        <name>a beta-D-glucoside</name>
        <dbReference type="ChEBI" id="CHEBI:22798"/>
    </ligand>
</feature>
<feature type="binding site" evidence="2">
    <location>
        <begin position="302"/>
        <end position="303"/>
    </location>
    <ligand>
        <name>a beta-D-glucoside</name>
        <dbReference type="ChEBI" id="CHEBI:22798"/>
    </ligand>
</feature>
<feature type="binding site" evidence="2">
    <location>
        <position position="414"/>
    </location>
    <ligand>
        <name>a beta-D-glucoside</name>
        <dbReference type="ChEBI" id="CHEBI:22798"/>
    </ligand>
</feature>
<feature type="binding site" evidence="4">
    <location>
        <position position="466"/>
    </location>
    <ligand>
        <name>a beta-D-glucoside</name>
        <dbReference type="ChEBI" id="CHEBI:22798"/>
    </ligand>
</feature>
<feature type="binding site" evidence="2">
    <location>
        <position position="504"/>
    </location>
    <ligand>
        <name>a beta-D-glucoside</name>
        <dbReference type="ChEBI" id="CHEBI:22798"/>
    </ligand>
</feature>
<feature type="binding site" evidence="2">
    <location>
        <begin position="511"/>
        <end position="512"/>
    </location>
    <ligand>
        <name>a beta-D-glucoside</name>
        <dbReference type="ChEBI" id="CHEBI:22798"/>
    </ligand>
</feature>
<feature type="binding site" evidence="1">
    <location>
        <position position="520"/>
    </location>
    <ligand>
        <name>a beta-D-glucoside</name>
        <dbReference type="ChEBI" id="CHEBI:22798"/>
    </ligand>
</feature>
<feature type="glycosylation site" description="N-linked (GlcNAc...) asparagine" evidence="5">
    <location>
        <position position="169"/>
    </location>
</feature>
<keyword id="KW-0150">Chloroplast</keyword>
<keyword id="KW-0325">Glycoprotein</keyword>
<keyword id="KW-0326">Glycosidase</keyword>
<keyword id="KW-0328">Glycosyltransferase</keyword>
<keyword id="KW-0378">Hydrolase</keyword>
<keyword id="KW-0472">Membrane</keyword>
<keyword id="KW-0934">Plastid</keyword>
<keyword id="KW-1002">Plastid outer membrane</keyword>
<keyword id="KW-1185">Reference proteome</keyword>
<keyword id="KW-0808">Transferase</keyword>
<evidence type="ECO:0000250" key="1">
    <source>
        <dbReference type="UniProtKB" id="Q1XH05"/>
    </source>
</evidence>
<evidence type="ECO:0000250" key="2">
    <source>
        <dbReference type="UniProtKB" id="Q7XSK0"/>
    </source>
</evidence>
<evidence type="ECO:0000250" key="3">
    <source>
        <dbReference type="UniProtKB" id="Q93Y07"/>
    </source>
</evidence>
<evidence type="ECO:0000250" key="4">
    <source>
        <dbReference type="UniProtKB" id="Q9SPP9"/>
    </source>
</evidence>
<evidence type="ECO:0000255" key="5">
    <source>
        <dbReference type="PROSITE-ProRule" id="PRU00498"/>
    </source>
</evidence>
<evidence type="ECO:0000255" key="6">
    <source>
        <dbReference type="PROSITE-ProRule" id="PRU10055"/>
    </source>
</evidence>
<evidence type="ECO:0000256" key="7">
    <source>
        <dbReference type="SAM" id="MobiDB-lite"/>
    </source>
</evidence>
<evidence type="ECO:0000269" key="8">
    <source>
    </source>
</evidence>
<evidence type="ECO:0000303" key="9">
    <source>
    </source>
</evidence>
<evidence type="ECO:0000303" key="10">
    <source>
    </source>
</evidence>
<evidence type="ECO:0000305" key="11"/>
<evidence type="ECO:0000312" key="12">
    <source>
        <dbReference type="EMBL" id="ABA95293.1"/>
    </source>
</evidence>
<evidence type="ECO:0000312" key="13">
    <source>
        <dbReference type="EMBL" id="BAF28826.1"/>
    </source>
</evidence>
<evidence type="ECO:0000312" key="14">
    <source>
        <dbReference type="EMBL" id="EAZ19256.1"/>
    </source>
</evidence>
<protein>
    <recommendedName>
        <fullName evidence="9">Beta-glucosidase-like SFR2, chloroplastic</fullName>
        <ecNumber evidence="3">2.4.1.184</ecNumber>
    </recommendedName>
    <alternativeName>
        <fullName evidence="10">Beta-glucosidase 36</fullName>
        <shortName evidence="10">Os11bglu36</shortName>
    </alternativeName>
    <alternativeName>
        <fullName evidence="9">Protein SENSITIVE TO FREEZING 2</fullName>
        <shortName evidence="9">OsSFR2</shortName>
    </alternativeName>
</protein>
<accession>Q8L6H7</accession>
<accession>F4MGF3</accession>
<sequence>MPLPAFVAAAARLAVLVAAAATAANAASYARYRRRHLRRIPSPIDESADPLADFRAFPSSDADDSEEDNFFFGLATAPAHVEDRLEDAWLQFATETSCDDNGNVRDQRPVDALMASAAGDGGSQQSWRSTGGENIGDREQRKPLRVAMEAMLRGFEILAESGESAGGDNCSHNVAAWHNVPCPQERLRFWSDPDAELKLAKETGISVFRMGVDWARLMPEEPTEELKSSVNFAALERYRWIIQRVREYGMKVMLTLFHHSLPPWAGKYGGWKMEKTVTYFMDFVRLVVDRVSNLVDYWVIFNEPHVFVMLTYCAGAWPGGDPNAIEVATSTLPTGVYNQALHWMAIAHSEAYDYIHSKSKNERKPIVGVAHHVSFTRPYGLFDVAAVALANSLTLFPYVDSICDKLDFIGINYYGQEVISGPGLKLVDNDEYSESGRGVYPDGLFRILIQFNERYKRLNIPFVITENGVSDETDLIRKPYILEHLLATYAAIIMGVRVLGYLFWTTSDNWEWADGYGPKFGLVAVDRANNLARKPRPSYFLFSRVVTTGKITRQDRMSAWRELQQAAVQKKTRPFFRAVDKHGRMYAGGLDRPIQRPFILRDWRFGHYKMEGLQDPLSCFIRCIFAPFSRQKKIHYIEDDVISYSIN</sequence>
<comment type="function">
    <text evidence="3 8">Galactosyltransferase synthesizing digalactosyldiacylglycerol from monogalactosyldiacylglycerol in the absence of UDP-galactose (By similarity). Potentially involved in freezing tolerance (PubMed:18466306).</text>
</comment>
<comment type="catalytic activity">
    <reaction evidence="3">
        <text>2 a 1,2-diacyl-3-O-(beta-D-galactosyl)-sn-glycerol = a 1,2-diacyl-3-O-[beta-D-galactosyl-(1-&gt;6)-beta-D-galactosyl]-sn-glycerol + a 1,2-diacyl-sn-glycerol</text>
        <dbReference type="Rhea" id="RHEA:15921"/>
        <dbReference type="ChEBI" id="CHEBI:17615"/>
        <dbReference type="ChEBI" id="CHEBI:17815"/>
        <dbReference type="ChEBI" id="CHEBI:87082"/>
        <dbReference type="EC" id="2.4.1.184"/>
    </reaction>
</comment>
<comment type="subcellular location">
    <subcellularLocation>
        <location evidence="3">Plastid</location>
        <location evidence="3">Chloroplast outer membrane</location>
    </subcellularLocation>
</comment>
<comment type="miscellaneous">
    <text evidence="8">Rice SFR2 is able to rescue freezing tolerance phenotype in Arabidopsis sfr2 mutant.</text>
</comment>
<comment type="similarity">
    <text evidence="11">Belongs to the glycosyl hydrolase 1 family.</text>
</comment>
<name>SFR2_ORYSJ</name>
<proteinExistence type="evidence at transcript level"/>
<dbReference type="EC" id="2.4.1.184" evidence="3"/>
<dbReference type="EMBL" id="AJ491323">
    <property type="protein sequence ID" value="CAD36515.1"/>
    <property type="molecule type" value="mRNA"/>
</dbReference>
<dbReference type="EMBL" id="DP000010">
    <property type="protein sequence ID" value="ABA95293.1"/>
    <property type="molecule type" value="Genomic_DNA"/>
</dbReference>
<dbReference type="EMBL" id="DP000010">
    <property type="protein sequence ID" value="ABA95294.1"/>
    <property type="molecule type" value="Genomic_DNA"/>
</dbReference>
<dbReference type="EMBL" id="DP000010">
    <property type="protein sequence ID" value="ABA95295.1"/>
    <property type="molecule type" value="Genomic_DNA"/>
</dbReference>
<dbReference type="EMBL" id="AP008217">
    <property type="protein sequence ID" value="BAF28826.1"/>
    <property type="molecule type" value="Genomic_DNA"/>
</dbReference>
<dbReference type="EMBL" id="AP014967">
    <property type="protein sequence ID" value="BAT15259.1"/>
    <property type="molecule type" value="Genomic_DNA"/>
</dbReference>
<dbReference type="EMBL" id="CM000148">
    <property type="protein sequence ID" value="EAZ19256.1"/>
    <property type="molecule type" value="Genomic_DNA"/>
</dbReference>
<dbReference type="RefSeq" id="XP_015617860.1">
    <property type="nucleotide sequence ID" value="XM_015762374.1"/>
</dbReference>
<dbReference type="RefSeq" id="XP_015617862.1">
    <property type="nucleotide sequence ID" value="XM_015762376.1"/>
</dbReference>
<dbReference type="RefSeq" id="XP_015617863.1">
    <property type="nucleotide sequence ID" value="XM_015762377.1"/>
</dbReference>
<dbReference type="RefSeq" id="XP_015617864.1">
    <property type="nucleotide sequence ID" value="XM_015762378.1"/>
</dbReference>
<dbReference type="RefSeq" id="XP_015617865.1">
    <property type="nucleotide sequence ID" value="XM_015762379.1"/>
</dbReference>
<dbReference type="RefSeq" id="XP_015617866.1">
    <property type="nucleotide sequence ID" value="XM_015762380.1"/>
</dbReference>
<dbReference type="RefSeq" id="XP_015617867.1">
    <property type="nucleotide sequence ID" value="XM_015762381.1"/>
</dbReference>
<dbReference type="RefSeq" id="XP_015617868.1">
    <property type="nucleotide sequence ID" value="XM_015762382.1"/>
</dbReference>
<dbReference type="RefSeq" id="XP_015617869.1">
    <property type="nucleotide sequence ID" value="XM_015762383.1"/>
</dbReference>
<dbReference type="RefSeq" id="XP_015617870.1">
    <property type="nucleotide sequence ID" value="XM_015762384.1"/>
</dbReference>
<dbReference type="RefSeq" id="XP_015617871.1">
    <property type="nucleotide sequence ID" value="XM_015762385.1"/>
</dbReference>
<dbReference type="RefSeq" id="XP_015617872.1">
    <property type="nucleotide sequence ID" value="XM_015762386.1"/>
</dbReference>
<dbReference type="RefSeq" id="XP_015617873.1">
    <property type="nucleotide sequence ID" value="XM_015762387.1"/>
</dbReference>
<dbReference type="SMR" id="Q8L6H7"/>
<dbReference type="FunCoup" id="Q8L6H7">
    <property type="interactions" value="728"/>
</dbReference>
<dbReference type="STRING" id="39947.Q8L6H7"/>
<dbReference type="CAZy" id="GH1">
    <property type="family name" value="Glycoside Hydrolase Family 1"/>
</dbReference>
<dbReference type="GlyCosmos" id="Q8L6H7">
    <property type="glycosylation" value="1 site, No reported glycans"/>
</dbReference>
<dbReference type="PaxDb" id="39947-Q8L6H7"/>
<dbReference type="EnsemblPlants" id="Os11t0683500-02">
    <property type="protein sequence ID" value="Os11t0683500-02"/>
    <property type="gene ID" value="Os11g0683500"/>
</dbReference>
<dbReference type="GeneID" id="4351127"/>
<dbReference type="Gramene" id="Os11t0683500-02">
    <property type="protein sequence ID" value="Os11t0683500-02"/>
    <property type="gene ID" value="Os11g0683500"/>
</dbReference>
<dbReference type="KEGG" id="dosa:Os11g0683500"/>
<dbReference type="KEGG" id="osa:4351127"/>
<dbReference type="eggNOG" id="KOG0626">
    <property type="taxonomic scope" value="Eukaryota"/>
</dbReference>
<dbReference type="HOGENOM" id="CLU_001859_11_0_1"/>
<dbReference type="InParanoid" id="Q8L6H7"/>
<dbReference type="OMA" id="ETSCDDN"/>
<dbReference type="OrthoDB" id="65569at2759"/>
<dbReference type="Proteomes" id="UP000000763">
    <property type="component" value="Chromosome 11"/>
</dbReference>
<dbReference type="Proteomes" id="UP000007752">
    <property type="component" value="Chromosome 11"/>
</dbReference>
<dbReference type="Proteomes" id="UP000059680">
    <property type="component" value="Chromosome 11"/>
</dbReference>
<dbReference type="ExpressionAtlas" id="Q8L6H7">
    <property type="expression patterns" value="baseline and differential"/>
</dbReference>
<dbReference type="GO" id="GO:0009707">
    <property type="term" value="C:chloroplast outer membrane"/>
    <property type="evidence" value="ECO:0007669"/>
    <property type="project" value="UniProtKB-SubCell"/>
</dbReference>
<dbReference type="GO" id="GO:0033907">
    <property type="term" value="F:beta-D-fucosidase activity"/>
    <property type="evidence" value="ECO:0007669"/>
    <property type="project" value="UniProtKB-ARBA"/>
</dbReference>
<dbReference type="GO" id="GO:0004565">
    <property type="term" value="F:beta-galactosidase activity"/>
    <property type="evidence" value="ECO:0007669"/>
    <property type="project" value="UniProtKB-ARBA"/>
</dbReference>
<dbReference type="GO" id="GO:0008422">
    <property type="term" value="F:beta-glucosidase activity"/>
    <property type="evidence" value="ECO:0000318"/>
    <property type="project" value="GO_Central"/>
</dbReference>
<dbReference type="GO" id="GO:0046480">
    <property type="term" value="F:galactolipid galactosyltransferase activity"/>
    <property type="evidence" value="ECO:0007669"/>
    <property type="project" value="UniProtKB-EC"/>
</dbReference>
<dbReference type="GO" id="GO:0005975">
    <property type="term" value="P:carbohydrate metabolic process"/>
    <property type="evidence" value="ECO:0007669"/>
    <property type="project" value="InterPro"/>
</dbReference>
<dbReference type="Gene3D" id="3.20.20.80">
    <property type="entry name" value="Glycosidases"/>
    <property type="match status" value="1"/>
</dbReference>
<dbReference type="InterPro" id="IPR001360">
    <property type="entry name" value="Glyco_hydro_1"/>
</dbReference>
<dbReference type="InterPro" id="IPR018120">
    <property type="entry name" value="Glyco_hydro_1_AS"/>
</dbReference>
<dbReference type="InterPro" id="IPR017853">
    <property type="entry name" value="Glycoside_hydrolase_SF"/>
</dbReference>
<dbReference type="PANTHER" id="PTHR10353:SF209">
    <property type="entry name" value="GALACTOLIPID GALACTOSYLTRANSFERASE SFR2, CHLOROPLASTIC"/>
    <property type="match status" value="1"/>
</dbReference>
<dbReference type="PANTHER" id="PTHR10353">
    <property type="entry name" value="GLYCOSYL HYDROLASE"/>
    <property type="match status" value="1"/>
</dbReference>
<dbReference type="Pfam" id="PF00232">
    <property type="entry name" value="Glyco_hydro_1"/>
    <property type="match status" value="2"/>
</dbReference>
<dbReference type="PRINTS" id="PR00131">
    <property type="entry name" value="GLHYDRLASE1"/>
</dbReference>
<dbReference type="SUPFAM" id="SSF51445">
    <property type="entry name" value="(Trans)glycosidases"/>
    <property type="match status" value="1"/>
</dbReference>
<dbReference type="PROSITE" id="PS00572">
    <property type="entry name" value="GLYCOSYL_HYDROL_F1_1"/>
    <property type="match status" value="1"/>
</dbReference>
<organism>
    <name type="scientific">Oryza sativa subsp. japonica</name>
    <name type="common">Rice</name>
    <dbReference type="NCBI Taxonomy" id="39947"/>
    <lineage>
        <taxon>Eukaryota</taxon>
        <taxon>Viridiplantae</taxon>
        <taxon>Streptophyta</taxon>
        <taxon>Embryophyta</taxon>
        <taxon>Tracheophyta</taxon>
        <taxon>Spermatophyta</taxon>
        <taxon>Magnoliopsida</taxon>
        <taxon>Liliopsida</taxon>
        <taxon>Poales</taxon>
        <taxon>Poaceae</taxon>
        <taxon>BOP clade</taxon>
        <taxon>Oryzoideae</taxon>
        <taxon>Oryzeae</taxon>
        <taxon>Oryzinae</taxon>
        <taxon>Oryza</taxon>
        <taxon>Oryza sativa</taxon>
    </lineage>
</organism>
<gene>
    <name evidence="9" type="primary">SFR2</name>
    <name evidence="10" type="synonym">BGLU36</name>
    <name evidence="13" type="ordered locus">Os11g0683500</name>
    <name evidence="12" type="ordered locus">LOC_Os11g45710</name>
    <name evidence="14" type="ORF">OsJ_34793</name>
</gene>